<evidence type="ECO:0000255" key="1">
    <source>
        <dbReference type="HAMAP-Rule" id="MF_01521"/>
    </source>
</evidence>
<accession>Q9K1E1</accession>
<sequence>MGFYALLLIALGMSMDAFAVALAKGAAVRMPPRKIAATALVFGTVEALTPLAGWVGGFYAKPFISEWDHWVAFVLLGGLGLKMMREGLSGEAEDVRESKRESLWMTVLTAFGTSIDSMIVGVGLAFMEVNIAFAAAIIGMATTVMVAVGLTAGRALGVLFGRCAEFAGGLVLIAIGTWTLLSHLGLIQ</sequence>
<protein>
    <recommendedName>
        <fullName evidence="1">Putative manganese efflux pump MntP</fullName>
    </recommendedName>
</protein>
<feature type="chain" id="PRO_0000155658" description="Putative manganese efflux pump MntP">
    <location>
        <begin position="1"/>
        <end position="188"/>
    </location>
</feature>
<feature type="transmembrane region" description="Helical" evidence="1">
    <location>
        <begin position="3"/>
        <end position="23"/>
    </location>
</feature>
<feature type="transmembrane region" description="Helical" evidence="1">
    <location>
        <begin position="35"/>
        <end position="55"/>
    </location>
</feature>
<feature type="transmembrane region" description="Helical" evidence="1">
    <location>
        <begin position="63"/>
        <end position="83"/>
    </location>
</feature>
<feature type="transmembrane region" description="Helical" evidence="1">
    <location>
        <begin position="104"/>
        <end position="126"/>
    </location>
</feature>
<feature type="transmembrane region" description="Helical" evidence="1">
    <location>
        <begin position="140"/>
        <end position="160"/>
    </location>
</feature>
<feature type="transmembrane region" description="Helical" evidence="1">
    <location>
        <begin position="167"/>
        <end position="187"/>
    </location>
</feature>
<organism>
    <name type="scientific">Neisseria meningitidis serogroup B (strain ATCC BAA-335 / MC58)</name>
    <dbReference type="NCBI Taxonomy" id="122586"/>
    <lineage>
        <taxon>Bacteria</taxon>
        <taxon>Pseudomonadati</taxon>
        <taxon>Pseudomonadota</taxon>
        <taxon>Betaproteobacteria</taxon>
        <taxon>Neisseriales</taxon>
        <taxon>Neisseriaceae</taxon>
        <taxon>Neisseria</taxon>
    </lineage>
</organism>
<proteinExistence type="inferred from homology"/>
<gene>
    <name evidence="1" type="primary">mntP</name>
    <name type="ordered locus">NMB0215</name>
</gene>
<comment type="function">
    <text evidence="1">Probably functions as a manganese efflux pump.</text>
</comment>
<comment type="subcellular location">
    <subcellularLocation>
        <location evidence="1">Cell inner membrane</location>
        <topology evidence="1">Multi-pass membrane protein</topology>
    </subcellularLocation>
</comment>
<comment type="similarity">
    <text evidence="1">Belongs to the MntP (TC 9.B.29) family.</text>
</comment>
<name>MNTP_NEIMB</name>
<reference key="1">
    <citation type="journal article" date="2000" name="Science">
        <title>Complete genome sequence of Neisseria meningitidis serogroup B strain MC58.</title>
        <authorList>
            <person name="Tettelin H."/>
            <person name="Saunders N.J."/>
            <person name="Heidelberg J.F."/>
            <person name="Jeffries A.C."/>
            <person name="Nelson K.E."/>
            <person name="Eisen J.A."/>
            <person name="Ketchum K.A."/>
            <person name="Hood D.W."/>
            <person name="Peden J.F."/>
            <person name="Dodson R.J."/>
            <person name="Nelson W.C."/>
            <person name="Gwinn M.L."/>
            <person name="DeBoy R.T."/>
            <person name="Peterson J.D."/>
            <person name="Hickey E.K."/>
            <person name="Haft D.H."/>
            <person name="Salzberg S.L."/>
            <person name="White O."/>
            <person name="Fleischmann R.D."/>
            <person name="Dougherty B.A."/>
            <person name="Mason T.M."/>
            <person name="Ciecko A."/>
            <person name="Parksey D.S."/>
            <person name="Blair E."/>
            <person name="Cittone H."/>
            <person name="Clark E.B."/>
            <person name="Cotton M.D."/>
            <person name="Utterback T.R."/>
            <person name="Khouri H.M."/>
            <person name="Qin H."/>
            <person name="Vamathevan J.J."/>
            <person name="Gill J."/>
            <person name="Scarlato V."/>
            <person name="Masignani V."/>
            <person name="Pizza M."/>
            <person name="Grandi G."/>
            <person name="Sun L."/>
            <person name="Smith H.O."/>
            <person name="Fraser C.M."/>
            <person name="Moxon E.R."/>
            <person name="Rappuoli R."/>
            <person name="Venter J.C."/>
        </authorList>
    </citation>
    <scope>NUCLEOTIDE SEQUENCE [LARGE SCALE GENOMIC DNA]</scope>
    <source>
        <strain>ATCC BAA-335 / MC58</strain>
    </source>
</reference>
<keyword id="KW-0997">Cell inner membrane</keyword>
<keyword id="KW-1003">Cell membrane</keyword>
<keyword id="KW-0406">Ion transport</keyword>
<keyword id="KW-0464">Manganese</keyword>
<keyword id="KW-0472">Membrane</keyword>
<keyword id="KW-1185">Reference proteome</keyword>
<keyword id="KW-0812">Transmembrane</keyword>
<keyword id="KW-1133">Transmembrane helix</keyword>
<keyword id="KW-0813">Transport</keyword>
<dbReference type="EMBL" id="AE002098">
    <property type="protein sequence ID" value="AAF40671.1"/>
    <property type="molecule type" value="Genomic_DNA"/>
</dbReference>
<dbReference type="PIR" id="C81224">
    <property type="entry name" value="C81224"/>
</dbReference>
<dbReference type="RefSeq" id="NP_273272.1">
    <property type="nucleotide sequence ID" value="NC_003112.2"/>
</dbReference>
<dbReference type="RefSeq" id="WP_002221883.1">
    <property type="nucleotide sequence ID" value="NC_003112.2"/>
</dbReference>
<dbReference type="FunCoup" id="Q9K1E1">
    <property type="interactions" value="40"/>
</dbReference>
<dbReference type="STRING" id="122586.NMB0215"/>
<dbReference type="PaxDb" id="122586-NMB0215"/>
<dbReference type="KEGG" id="nme:NMB0215"/>
<dbReference type="PATRIC" id="fig|122586.8.peg.271"/>
<dbReference type="HOGENOM" id="CLU_096410_0_0_4"/>
<dbReference type="InParanoid" id="Q9K1E1"/>
<dbReference type="OrthoDB" id="9811590at2"/>
<dbReference type="Proteomes" id="UP000000425">
    <property type="component" value="Chromosome"/>
</dbReference>
<dbReference type="GO" id="GO:0005886">
    <property type="term" value="C:plasma membrane"/>
    <property type="evidence" value="ECO:0000318"/>
    <property type="project" value="GO_Central"/>
</dbReference>
<dbReference type="GO" id="GO:0005384">
    <property type="term" value="F:manganese ion transmembrane transporter activity"/>
    <property type="evidence" value="ECO:0000318"/>
    <property type="project" value="GO_Central"/>
</dbReference>
<dbReference type="GO" id="GO:0030026">
    <property type="term" value="P:intracellular manganese ion homeostasis"/>
    <property type="evidence" value="ECO:0000318"/>
    <property type="project" value="GO_Central"/>
</dbReference>
<dbReference type="GO" id="GO:0140048">
    <property type="term" value="P:manganese ion export across plasma membrane"/>
    <property type="evidence" value="ECO:0000318"/>
    <property type="project" value="GO_Central"/>
</dbReference>
<dbReference type="HAMAP" id="MF_01521">
    <property type="entry name" value="MntP_pump"/>
    <property type="match status" value="1"/>
</dbReference>
<dbReference type="InterPro" id="IPR003810">
    <property type="entry name" value="Mntp/YtaF"/>
</dbReference>
<dbReference type="InterPro" id="IPR022929">
    <property type="entry name" value="Put_MntP"/>
</dbReference>
<dbReference type="PANTHER" id="PTHR35529">
    <property type="entry name" value="MANGANESE EFFLUX PUMP MNTP-RELATED"/>
    <property type="match status" value="1"/>
</dbReference>
<dbReference type="PANTHER" id="PTHR35529:SF1">
    <property type="entry name" value="MANGANESE EFFLUX PUMP MNTP-RELATED"/>
    <property type="match status" value="1"/>
</dbReference>
<dbReference type="Pfam" id="PF02659">
    <property type="entry name" value="Mntp"/>
    <property type="match status" value="1"/>
</dbReference>